<protein>
    <recommendedName>
        <fullName>Kinin-5</fullName>
    </recommendedName>
    <alternativeName>
        <fullName>Pea-K-5</fullName>
    </alternativeName>
</protein>
<name>KINI5_PERAM</name>
<feature type="peptide" id="PRO_0000043966" description="Kinin-5">
    <location>
        <begin position="1"/>
        <end position="8"/>
    </location>
</feature>
<feature type="modified residue" description="Glycine amide" evidence="1">
    <location>
        <position position="8"/>
    </location>
</feature>
<accession>P82689</accession>
<reference key="1">
    <citation type="journal article" date="1997" name="Regul. Pept.">
        <title>Isolation and structural elucidation of eight kinins from the retrocerebral complex of the American cockroach, Periplaneta americana.</title>
        <authorList>
            <person name="Predel R."/>
            <person name="Kellner R."/>
            <person name="Rapus J."/>
            <person name="Penzlin H."/>
            <person name="Gade G."/>
        </authorList>
    </citation>
    <scope>PROTEIN SEQUENCE</scope>
    <scope>FUNCTION</scope>
    <scope>MASS SPECTROMETRY</scope>
    <scope>AMIDATION AT GLY-8</scope>
    <source>
        <tissue>Corpora cardiaca</tissue>
    </source>
</reference>
<evidence type="ECO:0000269" key="1">
    <source>
    </source>
</evidence>
<evidence type="ECO:0000305" key="2"/>
<organism>
    <name type="scientific">Periplaneta americana</name>
    <name type="common">American cockroach</name>
    <name type="synonym">Blatta americana</name>
    <dbReference type="NCBI Taxonomy" id="6978"/>
    <lineage>
        <taxon>Eukaryota</taxon>
        <taxon>Metazoa</taxon>
        <taxon>Ecdysozoa</taxon>
        <taxon>Arthropoda</taxon>
        <taxon>Hexapoda</taxon>
        <taxon>Insecta</taxon>
        <taxon>Pterygota</taxon>
        <taxon>Neoptera</taxon>
        <taxon>Polyneoptera</taxon>
        <taxon>Dictyoptera</taxon>
        <taxon>Blattodea</taxon>
        <taxon>Blattoidea</taxon>
        <taxon>Blattidae</taxon>
        <taxon>Blattinae</taxon>
        <taxon>Periplaneta</taxon>
    </lineage>
</organism>
<dbReference type="GO" id="GO:0005576">
    <property type="term" value="C:extracellular region"/>
    <property type="evidence" value="ECO:0007669"/>
    <property type="project" value="UniProtKB-SubCell"/>
</dbReference>
<dbReference type="GO" id="GO:0007218">
    <property type="term" value="P:neuropeptide signaling pathway"/>
    <property type="evidence" value="ECO:0007669"/>
    <property type="project" value="UniProtKB-KW"/>
</dbReference>
<dbReference type="InterPro" id="IPR013202">
    <property type="entry name" value="Kinin_peptide"/>
</dbReference>
<dbReference type="Pfam" id="PF08260">
    <property type="entry name" value="Kinin"/>
    <property type="match status" value="1"/>
</dbReference>
<comment type="function">
    <text evidence="1">Mediates visceral muscle contractile activity (myotropic activity).</text>
</comment>
<comment type="subcellular location">
    <subcellularLocation>
        <location>Secreted</location>
    </subcellularLocation>
</comment>
<comment type="mass spectrometry" mass="864.1" method="Electrospray" evidence="1"/>
<comment type="similarity">
    <text evidence="2">Belongs to the kinin family.</text>
</comment>
<keyword id="KW-0027">Amidation</keyword>
<keyword id="KW-0903">Direct protein sequencing</keyword>
<keyword id="KW-0527">Neuropeptide</keyword>
<keyword id="KW-0964">Secreted</keyword>
<sequence length="8" mass="865">SPAFNSWG</sequence>
<proteinExistence type="evidence at protein level"/>